<feature type="chain" id="PRO_1000024475" description="UPF0295 protein GTNG_0491">
    <location>
        <begin position="1"/>
        <end position="117"/>
    </location>
</feature>
<feature type="transmembrane region" description="Helical" evidence="1">
    <location>
        <begin position="12"/>
        <end position="32"/>
    </location>
</feature>
<feature type="transmembrane region" description="Helical" evidence="1">
    <location>
        <begin position="42"/>
        <end position="62"/>
    </location>
</feature>
<evidence type="ECO:0000255" key="1">
    <source>
        <dbReference type="HAMAP-Rule" id="MF_01502"/>
    </source>
</evidence>
<sequence length="117" mass="13359">MGIKYSSKINKIRTFALSLIFVGVIVMYLGLFFRTSPIIMTLFMVLGLLFLVASGIVYFWIGTLSTRAVQVVCPSCGKVTKMLGRVDLCMFCREPLTLDRELEGKEFDEKYNKKRKN</sequence>
<gene>
    <name type="ordered locus">GTNG_0491</name>
</gene>
<organism>
    <name type="scientific">Geobacillus thermodenitrificans (strain NG80-2)</name>
    <dbReference type="NCBI Taxonomy" id="420246"/>
    <lineage>
        <taxon>Bacteria</taxon>
        <taxon>Bacillati</taxon>
        <taxon>Bacillota</taxon>
        <taxon>Bacilli</taxon>
        <taxon>Bacillales</taxon>
        <taxon>Anoxybacillaceae</taxon>
        <taxon>Geobacillus</taxon>
    </lineage>
</organism>
<dbReference type="EMBL" id="CP000557">
    <property type="protein sequence ID" value="ABO65873.1"/>
    <property type="molecule type" value="Genomic_DNA"/>
</dbReference>
<dbReference type="RefSeq" id="WP_008881533.1">
    <property type="nucleotide sequence ID" value="NC_009328.1"/>
</dbReference>
<dbReference type="SMR" id="A4IKL9"/>
<dbReference type="GeneID" id="87621905"/>
<dbReference type="KEGG" id="gtn:GTNG_0491"/>
<dbReference type="eggNOG" id="ENOG50313Y4">
    <property type="taxonomic scope" value="Bacteria"/>
</dbReference>
<dbReference type="HOGENOM" id="CLU_143991_0_0_9"/>
<dbReference type="Proteomes" id="UP000001578">
    <property type="component" value="Chromosome"/>
</dbReference>
<dbReference type="GO" id="GO:0005886">
    <property type="term" value="C:plasma membrane"/>
    <property type="evidence" value="ECO:0007669"/>
    <property type="project" value="UniProtKB-SubCell"/>
</dbReference>
<dbReference type="HAMAP" id="MF_01502">
    <property type="entry name" value="UPF0295"/>
    <property type="match status" value="1"/>
</dbReference>
<dbReference type="InterPro" id="IPR020912">
    <property type="entry name" value="UPF0295"/>
</dbReference>
<dbReference type="NCBIfam" id="NF002796">
    <property type="entry name" value="PRK02935.1"/>
    <property type="match status" value="1"/>
</dbReference>
<dbReference type="Pfam" id="PF11023">
    <property type="entry name" value="DUF2614"/>
    <property type="match status" value="1"/>
</dbReference>
<protein>
    <recommendedName>
        <fullName evidence="1">UPF0295 protein GTNG_0491</fullName>
    </recommendedName>
</protein>
<name>Y491_GEOTN</name>
<proteinExistence type="inferred from homology"/>
<comment type="subcellular location">
    <subcellularLocation>
        <location evidence="1">Cell membrane</location>
        <topology evidence="1">Multi-pass membrane protein</topology>
    </subcellularLocation>
</comment>
<comment type="similarity">
    <text evidence="1">Belongs to the UPF0295 family.</text>
</comment>
<accession>A4IKL9</accession>
<keyword id="KW-1003">Cell membrane</keyword>
<keyword id="KW-0472">Membrane</keyword>
<keyword id="KW-0812">Transmembrane</keyword>
<keyword id="KW-1133">Transmembrane helix</keyword>
<reference key="1">
    <citation type="journal article" date="2007" name="Proc. Natl. Acad. Sci. U.S.A.">
        <title>Genome and proteome of long-chain alkane degrading Geobacillus thermodenitrificans NG80-2 isolated from a deep-subsurface oil reservoir.</title>
        <authorList>
            <person name="Feng L."/>
            <person name="Wang W."/>
            <person name="Cheng J."/>
            <person name="Ren Y."/>
            <person name="Zhao G."/>
            <person name="Gao C."/>
            <person name="Tang Y."/>
            <person name="Liu X."/>
            <person name="Han W."/>
            <person name="Peng X."/>
            <person name="Liu R."/>
            <person name="Wang L."/>
        </authorList>
    </citation>
    <scope>NUCLEOTIDE SEQUENCE [LARGE SCALE GENOMIC DNA]</scope>
    <source>
        <strain>NG80-2</strain>
    </source>
</reference>